<reference key="1">
    <citation type="journal article" date="1994" name="Mech. Dev.">
        <title>Pagliaccio, a member of the Eph family of receptor tyrosine kinase genes, has localized expression in a subset of neural crest and neural tissues in Xenopus laevis embryos.</title>
        <authorList>
            <person name="Winning R.S."/>
            <person name="Sargent T.D."/>
        </authorList>
    </citation>
    <scope>NUCLEOTIDE SEQUENCE [MRNA]</scope>
    <scope>TISSUE SPECIFICITY</scope>
    <scope>DEVELOPMENTAL STAGE</scope>
    <source>
        <tissue>Neural crest</tissue>
    </source>
</reference>
<accession>Q91694</accession>
<comment type="function">
    <text evidence="2">Receptor tyrosine kinase which binds membrane-bound ephrin family ligands residing on adjacent cells, leading to contact-dependent bidirectional signaling into neighboring cells. The signaling pathway downstream of the receptor is referred to as forward signaling while the signaling pathway downstream of the ephrin ligand is referred to as reverse signaling. Highly promiscuous, it has the unique property among Eph receptors to bind and to be physiologically activated by both GPI-anchored ephrin-A and transmembrane ephrin-B ligands including EFNA1 and EFNB3. Upon activation by ephrin ligands, modulates cell morphology and integrin-dependent cell adhesion through regulation of the Rac, Rap and Rho GTPases activity. Plays an important role in the development of the nervous system controlling different steps of axonal guidance including the establishment of the corticospinal projections (By similarity).</text>
</comment>
<comment type="catalytic activity">
    <reaction evidence="8">
        <text>L-tyrosyl-[protein] + ATP = O-phospho-L-tyrosyl-[protein] + ADP + H(+)</text>
        <dbReference type="Rhea" id="RHEA:10596"/>
        <dbReference type="Rhea" id="RHEA-COMP:10136"/>
        <dbReference type="Rhea" id="RHEA-COMP:20101"/>
        <dbReference type="ChEBI" id="CHEBI:15378"/>
        <dbReference type="ChEBI" id="CHEBI:30616"/>
        <dbReference type="ChEBI" id="CHEBI:46858"/>
        <dbReference type="ChEBI" id="CHEBI:61978"/>
        <dbReference type="ChEBI" id="CHEBI:456216"/>
        <dbReference type="EC" id="2.7.10.1"/>
    </reaction>
</comment>
<comment type="subcellular location">
    <subcellularLocation>
        <location evidence="2">Cell membrane</location>
        <topology evidence="2">Single-pass type I membrane protein</topology>
    </subcellularLocation>
    <subcellularLocation>
        <location evidence="2">Early endosome</location>
    </subcellularLocation>
    <text evidence="2">Clustered upon activation and targeted to early endosome.</text>
</comment>
<comment type="tissue specificity">
    <text evidence="9">Localized expression in a subset of neural crest and neural tissues in embryos.</text>
</comment>
<comment type="developmental stage">
    <text evidence="9">Present transiently in visceral arch 3. Also expressed in the forebrain, rhombomeres R3 and R5 of the hindbrain and in the pronephros.</text>
</comment>
<comment type="similarity">
    <text evidence="4">Belongs to the protein kinase superfamily. Tyr protein kinase family. Ephrin receptor subfamily.</text>
</comment>
<gene>
    <name type="primary">epha4-b</name>
    <name type="synonym">pag</name>
</gene>
<evidence type="ECO:0000250" key="1"/>
<evidence type="ECO:0000250" key="2">
    <source>
        <dbReference type="UniProtKB" id="Q03137"/>
    </source>
</evidence>
<evidence type="ECO:0000255" key="3"/>
<evidence type="ECO:0000255" key="4">
    <source>
        <dbReference type="PROSITE-ProRule" id="PRU00159"/>
    </source>
</evidence>
<evidence type="ECO:0000255" key="5">
    <source>
        <dbReference type="PROSITE-ProRule" id="PRU00184"/>
    </source>
</evidence>
<evidence type="ECO:0000255" key="6">
    <source>
        <dbReference type="PROSITE-ProRule" id="PRU00316"/>
    </source>
</evidence>
<evidence type="ECO:0000255" key="7">
    <source>
        <dbReference type="PROSITE-ProRule" id="PRU00883"/>
    </source>
</evidence>
<evidence type="ECO:0000255" key="8">
    <source>
        <dbReference type="PROSITE-ProRule" id="PRU10028"/>
    </source>
</evidence>
<evidence type="ECO:0000269" key="9">
    <source>
    </source>
</evidence>
<feature type="signal peptide" evidence="3">
    <location>
        <begin position="1"/>
        <end position="20"/>
    </location>
</feature>
<feature type="chain" id="PRO_0000016811" description="Ephrin type-A receptor 4-B">
    <location>
        <begin position="21"/>
        <end position="985"/>
    </location>
</feature>
<feature type="topological domain" description="Extracellular" evidence="3">
    <location>
        <begin position="21"/>
        <end position="547"/>
    </location>
</feature>
<feature type="transmembrane region" description="Helical" evidence="3">
    <location>
        <begin position="548"/>
        <end position="569"/>
    </location>
</feature>
<feature type="topological domain" description="Cytoplasmic" evidence="3">
    <location>
        <begin position="570"/>
        <end position="985"/>
    </location>
</feature>
<feature type="domain" description="Eph LBD" evidence="7">
    <location>
        <begin position="30"/>
        <end position="209"/>
    </location>
</feature>
<feature type="domain" description="Fibronectin type-III 1" evidence="6">
    <location>
        <begin position="328"/>
        <end position="438"/>
    </location>
</feature>
<feature type="domain" description="Fibronectin type-III 2" evidence="6">
    <location>
        <begin position="439"/>
        <end position="536"/>
    </location>
</feature>
<feature type="domain" description="Protein kinase" evidence="4">
    <location>
        <begin position="620"/>
        <end position="881"/>
    </location>
</feature>
<feature type="domain" description="SAM" evidence="5">
    <location>
        <begin position="910"/>
        <end position="974"/>
    </location>
</feature>
<feature type="short sequence motif" description="PDZ-binding" evidence="3">
    <location>
        <begin position="983"/>
        <end position="985"/>
    </location>
</feature>
<feature type="active site" description="Proton acceptor" evidence="4 8">
    <location>
        <position position="745"/>
    </location>
</feature>
<feature type="binding site" evidence="4">
    <location>
        <begin position="626"/>
        <end position="634"/>
    </location>
    <ligand>
        <name>ATP</name>
        <dbReference type="ChEBI" id="CHEBI:30616"/>
    </ligand>
</feature>
<feature type="binding site" evidence="4">
    <location>
        <position position="652"/>
    </location>
    <ligand>
        <name>ATP</name>
        <dbReference type="ChEBI" id="CHEBI:30616"/>
    </ligand>
</feature>
<feature type="modified residue" description="Phosphotyrosine; by autocatalysis" evidence="1">
    <location>
        <position position="595"/>
    </location>
</feature>
<feature type="modified residue" description="Phosphotyrosine; by autocatalysis" evidence="1">
    <location>
        <position position="601"/>
    </location>
</feature>
<feature type="modified residue" description="Phosphotyrosine; by autocatalysis" evidence="3">
    <location>
        <position position="778"/>
    </location>
</feature>
<feature type="modified residue" description="Phosphotyrosine; by autocatalysis" evidence="3">
    <location>
        <position position="927"/>
    </location>
</feature>
<feature type="glycosylation site" description="N-linked (GlcNAc...) asparagine" evidence="3">
    <location>
        <position position="340"/>
    </location>
</feature>
<feature type="glycosylation site" description="N-linked (GlcNAc...) asparagine" evidence="3">
    <location>
        <position position="407"/>
    </location>
</feature>
<sequence length="985" mass="109730">MAGIVHGILFCGLFGLCWAVTGSRIYPASEVTLLDSRSVQGELGWIASPLEGGWEEVSIMDEKNTPIRTYQVCNVMESSQNNWLRTDWIPRSGAQRVYVEIKFTLRDCNSLPGVMGTCKETFNLYYYESNNDKERFIRETQYVKIDTIAADESFTQVDIGDRIMKLNTEVRDVGPLSKKGFYLAFQDVGACIALVSVRVFYKKCPLTVRNLAQFPDTITGSDTSSLVEVRGSCVDNSEEKDVPKMYCGADGEWLVPIGNCLCNAGFEEHNGGCQACKVGYYKALSTDAACSKCPPHSYALREGSTSCTCDRGYFRADTDPASMPCTRPPSAPQNLISNVNETSVNLEWSPPQNSGGRPDVSYNLVCKRCGSDLTRCSPCGSGVHYSPQQNGLKTTKVSINDLQAHTNYTFEVWAINGVSKQNPEQDQAVSVTVTTNQAAPSTVTQIQPKEITRHSVSLTWPEPERANGVILEYEVKYYEKDQNERSYRIVKTASRSADIKGLNPLTGYVFHVRARTAAGYGEFSGPFEFTTNTVPSPMIGEGTSPTVLLVSVAGSIVLVVILIAAFVISRRRSKYSKAKQEADEEKHLNQGVKTYVDPFTYEDPNQAVREFAKEIDASCIKIEKVIGVGEFGEVCSGRLKVPGKREIYVAIKTLKAGYTDKQRRDFLSEASIMGQFDHPNIIHLEGVVTKCKPVMIITEYMENGSLDAFLRKNDGRFTVIQLVGMLRGIGSGMKYLSDMSYVHRDLAARNILVNSNLVCKVSDFGMSRVLEDDPEAAYTTRGGKIPIRWTAPEAIAYRKFTSASDVWSYGIVMWEVMSYGERPYWDMSNQDVIKAIEEGYRLPPPMDCPIALHQLMLDCWQKDRSDRPKFGQIVSMLDKLIRNPNSLKRTGLENSRTNTALLDPSSPEWSQVASVLDWLQASKWKRYKDNFTAAGYTSLEAVVHVNQDDLTRIGISSPSHQNKILSSVQGMRTQLQQMQGRMVPV</sequence>
<organism>
    <name type="scientific">Xenopus laevis</name>
    <name type="common">African clawed frog</name>
    <dbReference type="NCBI Taxonomy" id="8355"/>
    <lineage>
        <taxon>Eukaryota</taxon>
        <taxon>Metazoa</taxon>
        <taxon>Chordata</taxon>
        <taxon>Craniata</taxon>
        <taxon>Vertebrata</taxon>
        <taxon>Euteleostomi</taxon>
        <taxon>Amphibia</taxon>
        <taxon>Batrachia</taxon>
        <taxon>Anura</taxon>
        <taxon>Pipoidea</taxon>
        <taxon>Pipidae</taxon>
        <taxon>Xenopodinae</taxon>
        <taxon>Xenopus</taxon>
        <taxon>Xenopus</taxon>
    </lineage>
</organism>
<dbReference type="EC" id="2.7.10.1"/>
<dbReference type="EMBL" id="L26099">
    <property type="protein sequence ID" value="AAA64464.1"/>
    <property type="molecule type" value="mRNA"/>
</dbReference>
<dbReference type="PIR" id="I51549">
    <property type="entry name" value="I51549"/>
</dbReference>
<dbReference type="SMR" id="Q91694"/>
<dbReference type="GlyCosmos" id="Q91694">
    <property type="glycosylation" value="2 sites, No reported glycans"/>
</dbReference>
<dbReference type="AGR" id="Xenbase:XB-GENE-1015806"/>
<dbReference type="Xenbase" id="XB-GENE-1015806">
    <property type="gene designation" value="epha4.L"/>
</dbReference>
<dbReference type="BRENDA" id="2.7.10.1">
    <property type="organism ID" value="6725"/>
</dbReference>
<dbReference type="Proteomes" id="UP000186698">
    <property type="component" value="Unplaced"/>
</dbReference>
<dbReference type="GO" id="GO:0030425">
    <property type="term" value="C:dendrite"/>
    <property type="evidence" value="ECO:0000318"/>
    <property type="project" value="GO_Central"/>
</dbReference>
<dbReference type="GO" id="GO:0031901">
    <property type="term" value="C:early endosome membrane"/>
    <property type="evidence" value="ECO:0000250"/>
    <property type="project" value="UniProtKB"/>
</dbReference>
<dbReference type="GO" id="GO:0005886">
    <property type="term" value="C:plasma membrane"/>
    <property type="evidence" value="ECO:0000250"/>
    <property type="project" value="UniProtKB"/>
</dbReference>
<dbReference type="GO" id="GO:0005524">
    <property type="term" value="F:ATP binding"/>
    <property type="evidence" value="ECO:0007669"/>
    <property type="project" value="UniProtKB-KW"/>
</dbReference>
<dbReference type="GO" id="GO:0005004">
    <property type="term" value="F:GPI-linked ephrin receptor activity"/>
    <property type="evidence" value="ECO:0000250"/>
    <property type="project" value="UniProtKB"/>
</dbReference>
<dbReference type="GO" id="GO:0005005">
    <property type="term" value="F:transmembrane-ephrin receptor activity"/>
    <property type="evidence" value="ECO:0000250"/>
    <property type="project" value="UniProtKB"/>
</dbReference>
<dbReference type="GO" id="GO:0007411">
    <property type="term" value="P:axon guidance"/>
    <property type="evidence" value="ECO:0000318"/>
    <property type="project" value="GO_Central"/>
</dbReference>
<dbReference type="GO" id="GO:0007155">
    <property type="term" value="P:cell adhesion"/>
    <property type="evidence" value="ECO:0007669"/>
    <property type="project" value="UniProtKB-KW"/>
</dbReference>
<dbReference type="GO" id="GO:0048013">
    <property type="term" value="P:ephrin receptor signaling pathway"/>
    <property type="evidence" value="ECO:0000318"/>
    <property type="project" value="GO_Central"/>
</dbReference>
<dbReference type="GO" id="GO:0043087">
    <property type="term" value="P:regulation of GTPase activity"/>
    <property type="evidence" value="ECO:0000250"/>
    <property type="project" value="UniProtKB"/>
</dbReference>
<dbReference type="CDD" id="cd10482">
    <property type="entry name" value="EphR_LBD_A4"/>
    <property type="match status" value="1"/>
</dbReference>
<dbReference type="CDD" id="cd00063">
    <property type="entry name" value="FN3"/>
    <property type="match status" value="2"/>
</dbReference>
<dbReference type="CDD" id="cd05066">
    <property type="entry name" value="PTKc_EphR_A"/>
    <property type="match status" value="1"/>
</dbReference>
<dbReference type="CDD" id="cd09545">
    <property type="entry name" value="SAM_EPH-A4"/>
    <property type="match status" value="1"/>
</dbReference>
<dbReference type="CDD" id="cd12087">
    <property type="entry name" value="TM_EGFR-like"/>
    <property type="match status" value="1"/>
</dbReference>
<dbReference type="FunFam" id="2.60.40.10:FF:000041">
    <property type="entry name" value="ephrin type-A receptor 3"/>
    <property type="match status" value="1"/>
</dbReference>
<dbReference type="FunFam" id="1.10.150.50:FF:000001">
    <property type="entry name" value="Ephrin type-A receptor 5"/>
    <property type="match status" value="1"/>
</dbReference>
<dbReference type="FunFam" id="1.10.510.10:FF:000019">
    <property type="entry name" value="Ephrin type-A receptor 5"/>
    <property type="match status" value="1"/>
</dbReference>
<dbReference type="FunFam" id="2.10.50.10:FF:000001">
    <property type="entry name" value="Ephrin type-A receptor 5"/>
    <property type="match status" value="1"/>
</dbReference>
<dbReference type="FunFam" id="2.60.40.10:FF:000045">
    <property type="entry name" value="Ephrin type-A receptor 5"/>
    <property type="match status" value="1"/>
</dbReference>
<dbReference type="FunFam" id="2.60.40.1770:FF:000001">
    <property type="entry name" value="Ephrin type-A receptor 5"/>
    <property type="match status" value="1"/>
</dbReference>
<dbReference type="FunFam" id="3.30.200.20:FF:000001">
    <property type="entry name" value="Ephrin type-A receptor 5"/>
    <property type="match status" value="1"/>
</dbReference>
<dbReference type="FunFam" id="2.60.120.260:FF:000001">
    <property type="entry name" value="Ephrin type-A receptor 7"/>
    <property type="match status" value="1"/>
</dbReference>
<dbReference type="Gene3D" id="2.60.40.1770">
    <property type="entry name" value="ephrin a2 ectodomain"/>
    <property type="match status" value="1"/>
</dbReference>
<dbReference type="Gene3D" id="2.60.120.260">
    <property type="entry name" value="Galactose-binding domain-like"/>
    <property type="match status" value="1"/>
</dbReference>
<dbReference type="Gene3D" id="2.60.40.10">
    <property type="entry name" value="Immunoglobulins"/>
    <property type="match status" value="2"/>
</dbReference>
<dbReference type="Gene3D" id="3.30.200.20">
    <property type="entry name" value="Phosphorylase Kinase, domain 1"/>
    <property type="match status" value="1"/>
</dbReference>
<dbReference type="Gene3D" id="1.10.150.50">
    <property type="entry name" value="Transcription Factor, Ets-1"/>
    <property type="match status" value="1"/>
</dbReference>
<dbReference type="Gene3D" id="1.10.510.10">
    <property type="entry name" value="Transferase(Phosphotransferase) domain 1"/>
    <property type="match status" value="1"/>
</dbReference>
<dbReference type="Gene3D" id="2.10.50.10">
    <property type="entry name" value="Tumor Necrosis Factor Receptor, subunit A, domain 2"/>
    <property type="match status" value="1"/>
</dbReference>
<dbReference type="InterPro" id="IPR027936">
    <property type="entry name" value="Eph_TM"/>
</dbReference>
<dbReference type="InterPro" id="IPR034270">
    <property type="entry name" value="EphA4_rcpt_lig-bd"/>
</dbReference>
<dbReference type="InterPro" id="IPR030602">
    <property type="entry name" value="EphA4_SAM"/>
</dbReference>
<dbReference type="InterPro" id="IPR001090">
    <property type="entry name" value="Ephrin_rcpt_lig-bd_dom"/>
</dbReference>
<dbReference type="InterPro" id="IPR050449">
    <property type="entry name" value="Ephrin_rcpt_TKs"/>
</dbReference>
<dbReference type="InterPro" id="IPR003961">
    <property type="entry name" value="FN3_dom"/>
</dbReference>
<dbReference type="InterPro" id="IPR036116">
    <property type="entry name" value="FN3_sf"/>
</dbReference>
<dbReference type="InterPro" id="IPR008979">
    <property type="entry name" value="Galactose-bd-like_sf"/>
</dbReference>
<dbReference type="InterPro" id="IPR009030">
    <property type="entry name" value="Growth_fac_rcpt_cys_sf"/>
</dbReference>
<dbReference type="InterPro" id="IPR013783">
    <property type="entry name" value="Ig-like_fold"/>
</dbReference>
<dbReference type="InterPro" id="IPR011009">
    <property type="entry name" value="Kinase-like_dom_sf"/>
</dbReference>
<dbReference type="InterPro" id="IPR000719">
    <property type="entry name" value="Prot_kinase_dom"/>
</dbReference>
<dbReference type="InterPro" id="IPR017441">
    <property type="entry name" value="Protein_kinase_ATP_BS"/>
</dbReference>
<dbReference type="InterPro" id="IPR001660">
    <property type="entry name" value="SAM"/>
</dbReference>
<dbReference type="InterPro" id="IPR013761">
    <property type="entry name" value="SAM/pointed_sf"/>
</dbReference>
<dbReference type="InterPro" id="IPR001245">
    <property type="entry name" value="Ser-Thr/Tyr_kinase_cat_dom"/>
</dbReference>
<dbReference type="InterPro" id="IPR008266">
    <property type="entry name" value="Tyr_kinase_AS"/>
</dbReference>
<dbReference type="InterPro" id="IPR020635">
    <property type="entry name" value="Tyr_kinase_cat_dom"/>
</dbReference>
<dbReference type="InterPro" id="IPR016257">
    <property type="entry name" value="Tyr_kinase_ephrin_rcpt"/>
</dbReference>
<dbReference type="InterPro" id="IPR001426">
    <property type="entry name" value="Tyr_kinase_rcpt_V_CS"/>
</dbReference>
<dbReference type="PANTHER" id="PTHR46877">
    <property type="entry name" value="EPH RECEPTOR A5"/>
    <property type="match status" value="1"/>
</dbReference>
<dbReference type="PANTHER" id="PTHR46877:SF18">
    <property type="entry name" value="EPHRIN TYPE-A RECEPTOR 4"/>
    <property type="match status" value="1"/>
</dbReference>
<dbReference type="Pfam" id="PF14575">
    <property type="entry name" value="EphA2_TM"/>
    <property type="match status" value="1"/>
</dbReference>
<dbReference type="Pfam" id="PF01404">
    <property type="entry name" value="Ephrin_lbd"/>
    <property type="match status" value="1"/>
</dbReference>
<dbReference type="Pfam" id="PF00041">
    <property type="entry name" value="fn3"/>
    <property type="match status" value="2"/>
</dbReference>
<dbReference type="Pfam" id="PF07714">
    <property type="entry name" value="PK_Tyr_Ser-Thr"/>
    <property type="match status" value="1"/>
</dbReference>
<dbReference type="Pfam" id="PF07647">
    <property type="entry name" value="SAM_2"/>
    <property type="match status" value="1"/>
</dbReference>
<dbReference type="PIRSF" id="PIRSF000666">
    <property type="entry name" value="TyrPK_ephrin_receptor"/>
    <property type="match status" value="1"/>
</dbReference>
<dbReference type="PRINTS" id="PR00014">
    <property type="entry name" value="FNTYPEIII"/>
</dbReference>
<dbReference type="PRINTS" id="PR00109">
    <property type="entry name" value="TYRKINASE"/>
</dbReference>
<dbReference type="SMART" id="SM00615">
    <property type="entry name" value="EPH_lbd"/>
    <property type="match status" value="1"/>
</dbReference>
<dbReference type="SMART" id="SM01411">
    <property type="entry name" value="Ephrin_rec_like"/>
    <property type="match status" value="1"/>
</dbReference>
<dbReference type="SMART" id="SM00060">
    <property type="entry name" value="FN3"/>
    <property type="match status" value="2"/>
</dbReference>
<dbReference type="SMART" id="SM00220">
    <property type="entry name" value="S_TKc"/>
    <property type="match status" value="1"/>
</dbReference>
<dbReference type="SMART" id="SM00454">
    <property type="entry name" value="SAM"/>
    <property type="match status" value="1"/>
</dbReference>
<dbReference type="SMART" id="SM00219">
    <property type="entry name" value="TyrKc"/>
    <property type="match status" value="1"/>
</dbReference>
<dbReference type="SUPFAM" id="SSF49265">
    <property type="entry name" value="Fibronectin type III"/>
    <property type="match status" value="1"/>
</dbReference>
<dbReference type="SUPFAM" id="SSF49785">
    <property type="entry name" value="Galactose-binding domain-like"/>
    <property type="match status" value="1"/>
</dbReference>
<dbReference type="SUPFAM" id="SSF57184">
    <property type="entry name" value="Growth factor receptor domain"/>
    <property type="match status" value="1"/>
</dbReference>
<dbReference type="SUPFAM" id="SSF56112">
    <property type="entry name" value="Protein kinase-like (PK-like)"/>
    <property type="match status" value="1"/>
</dbReference>
<dbReference type="SUPFAM" id="SSF47769">
    <property type="entry name" value="SAM/Pointed domain"/>
    <property type="match status" value="1"/>
</dbReference>
<dbReference type="PROSITE" id="PS01186">
    <property type="entry name" value="EGF_2"/>
    <property type="match status" value="1"/>
</dbReference>
<dbReference type="PROSITE" id="PS51550">
    <property type="entry name" value="EPH_LBD"/>
    <property type="match status" value="1"/>
</dbReference>
<dbReference type="PROSITE" id="PS50853">
    <property type="entry name" value="FN3"/>
    <property type="match status" value="2"/>
</dbReference>
<dbReference type="PROSITE" id="PS00107">
    <property type="entry name" value="PROTEIN_KINASE_ATP"/>
    <property type="match status" value="1"/>
</dbReference>
<dbReference type="PROSITE" id="PS50011">
    <property type="entry name" value="PROTEIN_KINASE_DOM"/>
    <property type="match status" value="1"/>
</dbReference>
<dbReference type="PROSITE" id="PS00109">
    <property type="entry name" value="PROTEIN_KINASE_TYR"/>
    <property type="match status" value="1"/>
</dbReference>
<dbReference type="PROSITE" id="PS00790">
    <property type="entry name" value="RECEPTOR_TYR_KIN_V_1"/>
    <property type="match status" value="1"/>
</dbReference>
<dbReference type="PROSITE" id="PS00791">
    <property type="entry name" value="RECEPTOR_TYR_KIN_V_2"/>
    <property type="match status" value="1"/>
</dbReference>
<dbReference type="PROSITE" id="PS50105">
    <property type="entry name" value="SAM_DOMAIN"/>
    <property type="match status" value="1"/>
</dbReference>
<protein>
    <recommendedName>
        <fullName>Ephrin type-A receptor 4-B</fullName>
        <ecNumber>2.7.10.1</ecNumber>
    </recommendedName>
    <alternativeName>
        <fullName>Pagliaccio</fullName>
    </alternativeName>
    <alternativeName>
        <fullName>Tyrosine-protein kinase receptor PAG</fullName>
    </alternativeName>
</protein>
<keyword id="KW-0067">ATP-binding</keyword>
<keyword id="KW-0130">Cell adhesion</keyword>
<keyword id="KW-1003">Cell membrane</keyword>
<keyword id="KW-0217">Developmental protein</keyword>
<keyword id="KW-0967">Endosome</keyword>
<keyword id="KW-0325">Glycoprotein</keyword>
<keyword id="KW-0418">Kinase</keyword>
<keyword id="KW-0472">Membrane</keyword>
<keyword id="KW-0524">Neurogenesis</keyword>
<keyword id="KW-0547">Nucleotide-binding</keyword>
<keyword id="KW-0597">Phosphoprotein</keyword>
<keyword id="KW-0675">Receptor</keyword>
<keyword id="KW-1185">Reference proteome</keyword>
<keyword id="KW-0677">Repeat</keyword>
<keyword id="KW-0732">Signal</keyword>
<keyword id="KW-0808">Transferase</keyword>
<keyword id="KW-0812">Transmembrane</keyword>
<keyword id="KW-1133">Transmembrane helix</keyword>
<keyword id="KW-0829">Tyrosine-protein kinase</keyword>
<name>EPA4B_XENLA</name>
<proteinExistence type="evidence at transcript level"/>